<name>RUVC_SYNC1</name>
<comment type="function">
    <text evidence="1">The RuvA-RuvB-RuvC complex processes Holliday junction (HJ) DNA during genetic recombination and DNA repair. Endonuclease that resolves HJ intermediates. Cleaves cruciform DNA by making single-stranded nicks across the HJ at symmetrical positions within the homologous arms, yielding a 5'-phosphate and a 3'-hydroxyl group; requires a central core of homology in the junction. The consensus cleavage sequence is 5'-(A/T)TT(C/G)-3'. Cleavage occurs on the 3'-side of the TT dinucleotide at the point of strand exchange. HJ branch migration catalyzed by RuvA-RuvB allows RuvC to scan DNA until it finds its consensus sequence, where it cleaves and resolves the cruciform DNA.</text>
</comment>
<comment type="catalytic activity">
    <reaction evidence="1">
        <text>Endonucleolytic cleavage at a junction such as a reciprocal single-stranded crossover between two homologous DNA duplexes (Holliday junction).</text>
        <dbReference type="EC" id="3.1.21.10"/>
    </reaction>
</comment>
<comment type="cofactor">
    <cofactor evidence="1">
        <name>Mg(2+)</name>
        <dbReference type="ChEBI" id="CHEBI:18420"/>
    </cofactor>
    <text evidence="1">Binds 2 Mg(2+) ion per subunit.</text>
</comment>
<comment type="subunit">
    <text evidence="1">Homodimer which binds Holliday junction (HJ) DNA. The HJ becomes 2-fold symmetrical on binding to RuvC with unstacked arms; it has a different conformation from HJ DNA in complex with RuvA. In the full resolvosome a probable DNA-RuvA(4)-RuvB(12)-RuvC(2) complex forms which resolves the HJ.</text>
</comment>
<comment type="subcellular location">
    <subcellularLocation>
        <location evidence="1">Cytoplasm</location>
    </subcellularLocation>
</comment>
<comment type="similarity">
    <text evidence="1">Belongs to the RuvC family.</text>
</comment>
<evidence type="ECO:0000255" key="1">
    <source>
        <dbReference type="HAMAP-Rule" id="MF_00034"/>
    </source>
</evidence>
<gene>
    <name evidence="1" type="primary">ruvC</name>
    <name type="ordered locus">Pcar_2336</name>
</gene>
<accession>Q3A232</accession>
<organism>
    <name type="scientific">Syntrophotalea carbinolica (strain DSM 2380 / NBRC 103641 / GraBd1)</name>
    <name type="common">Pelobacter carbinolicus</name>
    <dbReference type="NCBI Taxonomy" id="338963"/>
    <lineage>
        <taxon>Bacteria</taxon>
        <taxon>Pseudomonadati</taxon>
        <taxon>Thermodesulfobacteriota</taxon>
        <taxon>Desulfuromonadia</taxon>
        <taxon>Desulfuromonadales</taxon>
        <taxon>Syntrophotaleaceae</taxon>
        <taxon>Syntrophotalea</taxon>
    </lineage>
</organism>
<proteinExistence type="inferred from homology"/>
<protein>
    <recommendedName>
        <fullName evidence="1">Crossover junction endodeoxyribonuclease RuvC</fullName>
        <ecNumber evidence="1">3.1.21.10</ecNumber>
    </recommendedName>
    <alternativeName>
        <fullName evidence="1">Holliday junction nuclease RuvC</fullName>
    </alternativeName>
    <alternativeName>
        <fullName evidence="1">Holliday junction resolvase RuvC</fullName>
    </alternativeName>
</protein>
<sequence>MRILGIDPGTRITGYGLIEKIGNRLLHVDNGAIYTRTDAPLADRLKTIYDGLSRVIADYAPTGVAVERIFVAKNALSALKLGHARGVAMLAGVNASLPVAEYTAVEVKQAVVGYGRAAKPQVQQMVRVLLNLPEIAQEDASDALAVAICHAHCFHLNDLLT</sequence>
<keyword id="KW-0963">Cytoplasm</keyword>
<keyword id="KW-0227">DNA damage</keyword>
<keyword id="KW-0233">DNA recombination</keyword>
<keyword id="KW-0234">DNA repair</keyword>
<keyword id="KW-0238">DNA-binding</keyword>
<keyword id="KW-0255">Endonuclease</keyword>
<keyword id="KW-0378">Hydrolase</keyword>
<keyword id="KW-0460">Magnesium</keyword>
<keyword id="KW-0479">Metal-binding</keyword>
<keyword id="KW-0540">Nuclease</keyword>
<keyword id="KW-1185">Reference proteome</keyword>
<dbReference type="EC" id="3.1.21.10" evidence="1"/>
<dbReference type="EMBL" id="CP000142">
    <property type="protein sequence ID" value="ABA89575.1"/>
    <property type="molecule type" value="Genomic_DNA"/>
</dbReference>
<dbReference type="RefSeq" id="WP_011342097.1">
    <property type="nucleotide sequence ID" value="NC_007498.2"/>
</dbReference>
<dbReference type="SMR" id="Q3A232"/>
<dbReference type="STRING" id="338963.Pcar_2336"/>
<dbReference type="KEGG" id="pca:Pcar_2336"/>
<dbReference type="eggNOG" id="COG0817">
    <property type="taxonomic scope" value="Bacteria"/>
</dbReference>
<dbReference type="HOGENOM" id="CLU_091257_3_1_7"/>
<dbReference type="OrthoDB" id="9805499at2"/>
<dbReference type="Proteomes" id="UP000002534">
    <property type="component" value="Chromosome"/>
</dbReference>
<dbReference type="GO" id="GO:0005737">
    <property type="term" value="C:cytoplasm"/>
    <property type="evidence" value="ECO:0007669"/>
    <property type="project" value="UniProtKB-SubCell"/>
</dbReference>
<dbReference type="GO" id="GO:0048476">
    <property type="term" value="C:Holliday junction resolvase complex"/>
    <property type="evidence" value="ECO:0007669"/>
    <property type="project" value="UniProtKB-UniRule"/>
</dbReference>
<dbReference type="GO" id="GO:0008821">
    <property type="term" value="F:crossover junction DNA endonuclease activity"/>
    <property type="evidence" value="ECO:0007669"/>
    <property type="project" value="UniProtKB-UniRule"/>
</dbReference>
<dbReference type="GO" id="GO:0003677">
    <property type="term" value="F:DNA binding"/>
    <property type="evidence" value="ECO:0007669"/>
    <property type="project" value="UniProtKB-KW"/>
</dbReference>
<dbReference type="GO" id="GO:0000287">
    <property type="term" value="F:magnesium ion binding"/>
    <property type="evidence" value="ECO:0007669"/>
    <property type="project" value="UniProtKB-UniRule"/>
</dbReference>
<dbReference type="GO" id="GO:0006310">
    <property type="term" value="P:DNA recombination"/>
    <property type="evidence" value="ECO:0007669"/>
    <property type="project" value="UniProtKB-UniRule"/>
</dbReference>
<dbReference type="GO" id="GO:0006281">
    <property type="term" value="P:DNA repair"/>
    <property type="evidence" value="ECO:0007669"/>
    <property type="project" value="UniProtKB-UniRule"/>
</dbReference>
<dbReference type="CDD" id="cd16962">
    <property type="entry name" value="RuvC"/>
    <property type="match status" value="1"/>
</dbReference>
<dbReference type="FunFam" id="3.30.420.10:FF:000002">
    <property type="entry name" value="Crossover junction endodeoxyribonuclease RuvC"/>
    <property type="match status" value="1"/>
</dbReference>
<dbReference type="Gene3D" id="3.30.420.10">
    <property type="entry name" value="Ribonuclease H-like superfamily/Ribonuclease H"/>
    <property type="match status" value="1"/>
</dbReference>
<dbReference type="HAMAP" id="MF_00034">
    <property type="entry name" value="RuvC"/>
    <property type="match status" value="1"/>
</dbReference>
<dbReference type="InterPro" id="IPR012337">
    <property type="entry name" value="RNaseH-like_sf"/>
</dbReference>
<dbReference type="InterPro" id="IPR036397">
    <property type="entry name" value="RNaseH_sf"/>
</dbReference>
<dbReference type="InterPro" id="IPR020563">
    <property type="entry name" value="X-over_junc_endoDNase_Mg_BS"/>
</dbReference>
<dbReference type="InterPro" id="IPR002176">
    <property type="entry name" value="X-over_junc_endoDNase_RuvC"/>
</dbReference>
<dbReference type="NCBIfam" id="NF000711">
    <property type="entry name" value="PRK00039.2-1"/>
    <property type="match status" value="1"/>
</dbReference>
<dbReference type="NCBIfam" id="TIGR00228">
    <property type="entry name" value="ruvC"/>
    <property type="match status" value="1"/>
</dbReference>
<dbReference type="PANTHER" id="PTHR30194">
    <property type="entry name" value="CROSSOVER JUNCTION ENDODEOXYRIBONUCLEASE RUVC"/>
    <property type="match status" value="1"/>
</dbReference>
<dbReference type="PANTHER" id="PTHR30194:SF3">
    <property type="entry name" value="CROSSOVER JUNCTION ENDODEOXYRIBONUCLEASE RUVC"/>
    <property type="match status" value="1"/>
</dbReference>
<dbReference type="Pfam" id="PF02075">
    <property type="entry name" value="RuvC"/>
    <property type="match status" value="1"/>
</dbReference>
<dbReference type="PRINTS" id="PR00696">
    <property type="entry name" value="RSOLVASERUVC"/>
</dbReference>
<dbReference type="SUPFAM" id="SSF53098">
    <property type="entry name" value="Ribonuclease H-like"/>
    <property type="match status" value="1"/>
</dbReference>
<dbReference type="PROSITE" id="PS01321">
    <property type="entry name" value="RUVC"/>
    <property type="match status" value="1"/>
</dbReference>
<feature type="chain" id="PRO_0000225159" description="Crossover junction endodeoxyribonuclease RuvC">
    <location>
        <begin position="1"/>
        <end position="161"/>
    </location>
</feature>
<feature type="active site" evidence="1">
    <location>
        <position position="7"/>
    </location>
</feature>
<feature type="active site" evidence="1">
    <location>
        <position position="67"/>
    </location>
</feature>
<feature type="active site" evidence="1">
    <location>
        <position position="139"/>
    </location>
</feature>
<feature type="binding site" evidence="1">
    <location>
        <position position="7"/>
    </location>
    <ligand>
        <name>Mg(2+)</name>
        <dbReference type="ChEBI" id="CHEBI:18420"/>
        <label>1</label>
    </ligand>
</feature>
<feature type="binding site" evidence="1">
    <location>
        <position position="67"/>
    </location>
    <ligand>
        <name>Mg(2+)</name>
        <dbReference type="ChEBI" id="CHEBI:18420"/>
        <label>2</label>
    </ligand>
</feature>
<feature type="binding site" evidence="1">
    <location>
        <position position="139"/>
    </location>
    <ligand>
        <name>Mg(2+)</name>
        <dbReference type="ChEBI" id="CHEBI:18420"/>
        <label>1</label>
    </ligand>
</feature>
<reference key="1">
    <citation type="submission" date="2005-10" db="EMBL/GenBank/DDBJ databases">
        <title>Complete sequence of Pelobacter carbinolicus DSM 2380.</title>
        <authorList>
            <person name="Copeland A."/>
            <person name="Lucas S."/>
            <person name="Lapidus A."/>
            <person name="Barry K."/>
            <person name="Detter J.C."/>
            <person name="Glavina T."/>
            <person name="Hammon N."/>
            <person name="Israni S."/>
            <person name="Pitluck S."/>
            <person name="Chertkov O."/>
            <person name="Schmutz J."/>
            <person name="Larimer F."/>
            <person name="Land M."/>
            <person name="Kyrpides N."/>
            <person name="Ivanova N."/>
            <person name="Richardson P."/>
        </authorList>
    </citation>
    <scope>NUCLEOTIDE SEQUENCE [LARGE SCALE GENOMIC DNA]</scope>
    <source>
        <strain>DSM 2380 / NBRC 103641 / GraBd1</strain>
    </source>
</reference>